<organism>
    <name type="scientific">Cupriavidus taiwanensis (strain DSM 17343 / BCRC 17206 / CCUG 44338 / CIP 107171 / LMG 19424 / R1)</name>
    <name type="common">Ralstonia taiwanensis (strain LMG 19424)</name>
    <dbReference type="NCBI Taxonomy" id="977880"/>
    <lineage>
        <taxon>Bacteria</taxon>
        <taxon>Pseudomonadati</taxon>
        <taxon>Pseudomonadota</taxon>
        <taxon>Betaproteobacteria</taxon>
        <taxon>Burkholderiales</taxon>
        <taxon>Burkholderiaceae</taxon>
        <taxon>Cupriavidus</taxon>
    </lineage>
</organism>
<name>FETP_CUPTR</name>
<evidence type="ECO:0000255" key="1">
    <source>
        <dbReference type="HAMAP-Rule" id="MF_00686"/>
    </source>
</evidence>
<feature type="chain" id="PRO_1000131837" description="Probable Fe(2+)-trafficking protein">
    <location>
        <begin position="1"/>
        <end position="90"/>
    </location>
</feature>
<comment type="function">
    <text evidence="1">Could be a mediator in iron transactions between iron acquisition and iron-requiring processes, such as synthesis and/or repair of Fe-S clusters in biosynthetic enzymes.</text>
</comment>
<comment type="similarity">
    <text evidence="1">Belongs to the Fe(2+)-trafficking protein family.</text>
</comment>
<sequence>MARTVHCIKLNKEAEGLDFPPLPGELGKKIWQSVSKEAWAGWLKHQTMLINENRLNMADARARQYLLKQTEKYFFGEGADQAQGYVPPQS</sequence>
<accession>B3R1I2</accession>
<protein>
    <recommendedName>
        <fullName evidence="1">Probable Fe(2+)-trafficking protein</fullName>
    </recommendedName>
</protein>
<dbReference type="EMBL" id="CU633749">
    <property type="protein sequence ID" value="CAQ69830.1"/>
    <property type="molecule type" value="Genomic_DNA"/>
</dbReference>
<dbReference type="RefSeq" id="WP_012353145.1">
    <property type="nucleotide sequence ID" value="NC_010528.1"/>
</dbReference>
<dbReference type="SMR" id="B3R1I2"/>
<dbReference type="GeneID" id="29762189"/>
<dbReference type="KEGG" id="cti:RALTA_A1889"/>
<dbReference type="eggNOG" id="COG2924">
    <property type="taxonomic scope" value="Bacteria"/>
</dbReference>
<dbReference type="HOGENOM" id="CLU_170994_0_0_4"/>
<dbReference type="BioCyc" id="CTAI977880:RALTA_RS09105-MONOMER"/>
<dbReference type="Proteomes" id="UP000001692">
    <property type="component" value="Chromosome 1"/>
</dbReference>
<dbReference type="GO" id="GO:0005829">
    <property type="term" value="C:cytosol"/>
    <property type="evidence" value="ECO:0007669"/>
    <property type="project" value="TreeGrafter"/>
</dbReference>
<dbReference type="GO" id="GO:0005506">
    <property type="term" value="F:iron ion binding"/>
    <property type="evidence" value="ECO:0007669"/>
    <property type="project" value="UniProtKB-UniRule"/>
</dbReference>
<dbReference type="GO" id="GO:0034599">
    <property type="term" value="P:cellular response to oxidative stress"/>
    <property type="evidence" value="ECO:0007669"/>
    <property type="project" value="TreeGrafter"/>
</dbReference>
<dbReference type="FunFam" id="1.10.3880.10:FF:000001">
    <property type="entry name" value="Probable Fe(2+)-trafficking protein"/>
    <property type="match status" value="1"/>
</dbReference>
<dbReference type="Gene3D" id="1.10.3880.10">
    <property type="entry name" value="Fe(II) trafficking protein YggX"/>
    <property type="match status" value="1"/>
</dbReference>
<dbReference type="HAMAP" id="MF_00686">
    <property type="entry name" value="Fe_traffic_YggX"/>
    <property type="match status" value="1"/>
</dbReference>
<dbReference type="InterPro" id="IPR007457">
    <property type="entry name" value="Fe_traffick_prot_YggX"/>
</dbReference>
<dbReference type="InterPro" id="IPR036766">
    <property type="entry name" value="Fe_traffick_prot_YggX_sf"/>
</dbReference>
<dbReference type="NCBIfam" id="NF003817">
    <property type="entry name" value="PRK05408.1"/>
    <property type="match status" value="1"/>
</dbReference>
<dbReference type="PANTHER" id="PTHR36965">
    <property type="entry name" value="FE(2+)-TRAFFICKING PROTEIN-RELATED"/>
    <property type="match status" value="1"/>
</dbReference>
<dbReference type="PANTHER" id="PTHR36965:SF1">
    <property type="entry name" value="FE(2+)-TRAFFICKING PROTEIN-RELATED"/>
    <property type="match status" value="1"/>
</dbReference>
<dbReference type="Pfam" id="PF04362">
    <property type="entry name" value="Iron_traffic"/>
    <property type="match status" value="1"/>
</dbReference>
<dbReference type="PIRSF" id="PIRSF029827">
    <property type="entry name" value="Fe_traffic_YggX"/>
    <property type="match status" value="1"/>
</dbReference>
<dbReference type="SUPFAM" id="SSF111148">
    <property type="entry name" value="YggX-like"/>
    <property type="match status" value="1"/>
</dbReference>
<keyword id="KW-0408">Iron</keyword>
<gene>
    <name type="ordered locus">RALTA_A1889</name>
</gene>
<proteinExistence type="inferred from homology"/>
<reference key="1">
    <citation type="journal article" date="2008" name="Genome Res.">
        <title>Genome sequence of the beta-rhizobium Cupriavidus taiwanensis and comparative genomics of rhizobia.</title>
        <authorList>
            <person name="Amadou C."/>
            <person name="Pascal G."/>
            <person name="Mangenot S."/>
            <person name="Glew M."/>
            <person name="Bontemps C."/>
            <person name="Capela D."/>
            <person name="Carrere S."/>
            <person name="Cruveiller S."/>
            <person name="Dossat C."/>
            <person name="Lajus A."/>
            <person name="Marchetti M."/>
            <person name="Poinsot V."/>
            <person name="Rouy Z."/>
            <person name="Servin B."/>
            <person name="Saad M."/>
            <person name="Schenowitz C."/>
            <person name="Barbe V."/>
            <person name="Batut J."/>
            <person name="Medigue C."/>
            <person name="Masson-Boivin C."/>
        </authorList>
    </citation>
    <scope>NUCLEOTIDE SEQUENCE [LARGE SCALE GENOMIC DNA]</scope>
    <source>
        <strain>DSM 17343 / BCRC 17206 / CCUG 44338 / CIP 107171 / LMG 19424 / R1</strain>
    </source>
</reference>